<evidence type="ECO:0000250" key="1"/>
<evidence type="ECO:0000255" key="2">
    <source>
        <dbReference type="HAMAP-Rule" id="MF_00100"/>
    </source>
</evidence>
<evidence type="ECO:0000256" key="3">
    <source>
        <dbReference type="SAM" id="MobiDB-lite"/>
    </source>
</evidence>
<organism>
    <name type="scientific">Lachnospira eligens (strain ATCC 27750 / DSM 3376 / VPI C15-48 / C15-B4)</name>
    <name type="common">Eubacterium eligens</name>
    <dbReference type="NCBI Taxonomy" id="515620"/>
    <lineage>
        <taxon>Bacteria</taxon>
        <taxon>Bacillati</taxon>
        <taxon>Bacillota</taxon>
        <taxon>Clostridia</taxon>
        <taxon>Lachnospirales</taxon>
        <taxon>Lachnospiraceae</taxon>
        <taxon>Lachnospira</taxon>
    </lineage>
</organism>
<feature type="chain" id="PRO_1000202772" description="Translation initiation factor IF-2">
    <location>
        <begin position="1"/>
        <end position="939"/>
    </location>
</feature>
<feature type="domain" description="tr-type G">
    <location>
        <begin position="440"/>
        <end position="609"/>
    </location>
</feature>
<feature type="region of interest" description="Disordered" evidence="3">
    <location>
        <begin position="48"/>
        <end position="355"/>
    </location>
</feature>
<feature type="region of interest" description="G1" evidence="1">
    <location>
        <begin position="449"/>
        <end position="456"/>
    </location>
</feature>
<feature type="region of interest" description="G2" evidence="1">
    <location>
        <begin position="474"/>
        <end position="478"/>
    </location>
</feature>
<feature type="region of interest" description="G3" evidence="1">
    <location>
        <begin position="495"/>
        <end position="498"/>
    </location>
</feature>
<feature type="region of interest" description="G4" evidence="1">
    <location>
        <begin position="549"/>
        <end position="552"/>
    </location>
</feature>
<feature type="region of interest" description="G5" evidence="1">
    <location>
        <begin position="585"/>
        <end position="587"/>
    </location>
</feature>
<feature type="compositionally biased region" description="Low complexity" evidence="3">
    <location>
        <begin position="79"/>
        <end position="93"/>
    </location>
</feature>
<feature type="compositionally biased region" description="Basic and acidic residues" evidence="3">
    <location>
        <begin position="114"/>
        <end position="130"/>
    </location>
</feature>
<feature type="compositionally biased region" description="Low complexity" evidence="3">
    <location>
        <begin position="131"/>
        <end position="257"/>
    </location>
</feature>
<feature type="compositionally biased region" description="Basic and acidic residues" evidence="3">
    <location>
        <begin position="287"/>
        <end position="355"/>
    </location>
</feature>
<feature type="binding site" evidence="2">
    <location>
        <begin position="449"/>
        <end position="456"/>
    </location>
    <ligand>
        <name>GTP</name>
        <dbReference type="ChEBI" id="CHEBI:37565"/>
    </ligand>
</feature>
<feature type="binding site" evidence="2">
    <location>
        <begin position="495"/>
        <end position="499"/>
    </location>
    <ligand>
        <name>GTP</name>
        <dbReference type="ChEBI" id="CHEBI:37565"/>
    </ligand>
</feature>
<feature type="binding site" evidence="2">
    <location>
        <begin position="549"/>
        <end position="552"/>
    </location>
    <ligand>
        <name>GTP</name>
        <dbReference type="ChEBI" id="CHEBI:37565"/>
    </ligand>
</feature>
<proteinExistence type="inferred from homology"/>
<accession>C4Z5N7</accession>
<comment type="function">
    <text evidence="2">One of the essential components for the initiation of protein synthesis. Protects formylmethionyl-tRNA from spontaneous hydrolysis and promotes its binding to the 30S ribosomal subunits. Also involved in the hydrolysis of GTP during the formation of the 70S ribosomal complex.</text>
</comment>
<comment type="subcellular location">
    <subcellularLocation>
        <location evidence="2">Cytoplasm</location>
    </subcellularLocation>
</comment>
<comment type="similarity">
    <text evidence="2">Belongs to the TRAFAC class translation factor GTPase superfamily. Classic translation factor GTPase family. IF-2 subfamily.</text>
</comment>
<protein>
    <recommendedName>
        <fullName evidence="2">Translation initiation factor IF-2</fullName>
    </recommendedName>
</protein>
<gene>
    <name evidence="2" type="primary">infB</name>
    <name type="ordered locus">EUBELI_00894</name>
</gene>
<keyword id="KW-0963">Cytoplasm</keyword>
<keyword id="KW-0342">GTP-binding</keyword>
<keyword id="KW-0396">Initiation factor</keyword>
<keyword id="KW-0547">Nucleotide-binding</keyword>
<keyword id="KW-0648">Protein biosynthesis</keyword>
<keyword id="KW-1185">Reference proteome</keyword>
<reference key="1">
    <citation type="journal article" date="2009" name="Proc. Natl. Acad. Sci. U.S.A.">
        <title>Characterizing a model human gut microbiota composed of members of its two dominant bacterial phyla.</title>
        <authorList>
            <person name="Mahowald M.A."/>
            <person name="Rey F.E."/>
            <person name="Seedorf H."/>
            <person name="Turnbaugh P.J."/>
            <person name="Fulton R.S."/>
            <person name="Wollam A."/>
            <person name="Shah N."/>
            <person name="Wang C."/>
            <person name="Magrini V."/>
            <person name="Wilson R.K."/>
            <person name="Cantarel B.L."/>
            <person name="Coutinho P.M."/>
            <person name="Henrissat B."/>
            <person name="Crock L.W."/>
            <person name="Russell A."/>
            <person name="Verberkmoes N.C."/>
            <person name="Hettich R.L."/>
            <person name="Gordon J.I."/>
        </authorList>
    </citation>
    <scope>NUCLEOTIDE SEQUENCE [LARGE SCALE GENOMIC DNA]</scope>
    <source>
        <strain>ATCC 27750 / DSM 3376 / VPI C15-48 / C15-B4</strain>
    </source>
</reference>
<dbReference type="EMBL" id="CP001104">
    <property type="protein sequence ID" value="ACR71896.1"/>
    <property type="molecule type" value="Genomic_DNA"/>
</dbReference>
<dbReference type="RefSeq" id="WP_012739132.1">
    <property type="nucleotide sequence ID" value="NC_012778.1"/>
</dbReference>
<dbReference type="SMR" id="C4Z5N7"/>
<dbReference type="STRING" id="515620.EUBELI_00894"/>
<dbReference type="GeneID" id="41355629"/>
<dbReference type="KEGG" id="eel:EUBELI_00894"/>
<dbReference type="eggNOG" id="COG0532">
    <property type="taxonomic scope" value="Bacteria"/>
</dbReference>
<dbReference type="HOGENOM" id="CLU_006301_5_1_9"/>
<dbReference type="Proteomes" id="UP000001476">
    <property type="component" value="Chromosome"/>
</dbReference>
<dbReference type="GO" id="GO:0005829">
    <property type="term" value="C:cytosol"/>
    <property type="evidence" value="ECO:0007669"/>
    <property type="project" value="TreeGrafter"/>
</dbReference>
<dbReference type="GO" id="GO:0005525">
    <property type="term" value="F:GTP binding"/>
    <property type="evidence" value="ECO:0007669"/>
    <property type="project" value="UniProtKB-KW"/>
</dbReference>
<dbReference type="GO" id="GO:0003924">
    <property type="term" value="F:GTPase activity"/>
    <property type="evidence" value="ECO:0007669"/>
    <property type="project" value="UniProtKB-UniRule"/>
</dbReference>
<dbReference type="GO" id="GO:0003743">
    <property type="term" value="F:translation initiation factor activity"/>
    <property type="evidence" value="ECO:0007669"/>
    <property type="project" value="UniProtKB-UniRule"/>
</dbReference>
<dbReference type="CDD" id="cd01887">
    <property type="entry name" value="IF2_eIF5B"/>
    <property type="match status" value="1"/>
</dbReference>
<dbReference type="CDD" id="cd03702">
    <property type="entry name" value="IF2_mtIF2_II"/>
    <property type="match status" value="1"/>
</dbReference>
<dbReference type="CDD" id="cd03692">
    <property type="entry name" value="mtIF2_IVc"/>
    <property type="match status" value="1"/>
</dbReference>
<dbReference type="FunFam" id="2.40.30.10:FF:000007">
    <property type="entry name" value="Translation initiation factor IF-2"/>
    <property type="match status" value="1"/>
</dbReference>
<dbReference type="FunFam" id="2.40.30.10:FF:000008">
    <property type="entry name" value="Translation initiation factor IF-2"/>
    <property type="match status" value="1"/>
</dbReference>
<dbReference type="FunFam" id="3.40.50.10050:FF:000001">
    <property type="entry name" value="Translation initiation factor IF-2"/>
    <property type="match status" value="1"/>
</dbReference>
<dbReference type="FunFam" id="3.40.50.300:FF:000019">
    <property type="entry name" value="Translation initiation factor IF-2"/>
    <property type="match status" value="1"/>
</dbReference>
<dbReference type="Gene3D" id="1.10.10.2480">
    <property type="match status" value="1"/>
</dbReference>
<dbReference type="Gene3D" id="3.40.50.300">
    <property type="entry name" value="P-loop containing nucleotide triphosphate hydrolases"/>
    <property type="match status" value="1"/>
</dbReference>
<dbReference type="Gene3D" id="2.40.30.10">
    <property type="entry name" value="Translation factors"/>
    <property type="match status" value="2"/>
</dbReference>
<dbReference type="Gene3D" id="3.40.50.10050">
    <property type="entry name" value="Translation initiation factor IF- 2, domain 3"/>
    <property type="match status" value="1"/>
</dbReference>
<dbReference type="HAMAP" id="MF_00100_B">
    <property type="entry name" value="IF_2_B"/>
    <property type="match status" value="1"/>
</dbReference>
<dbReference type="InterPro" id="IPR053905">
    <property type="entry name" value="EF-G-like_DII"/>
</dbReference>
<dbReference type="InterPro" id="IPR044145">
    <property type="entry name" value="IF2_II"/>
</dbReference>
<dbReference type="InterPro" id="IPR006847">
    <property type="entry name" value="IF2_N"/>
</dbReference>
<dbReference type="InterPro" id="IPR027417">
    <property type="entry name" value="P-loop_NTPase"/>
</dbReference>
<dbReference type="InterPro" id="IPR005225">
    <property type="entry name" value="Small_GTP-bd"/>
</dbReference>
<dbReference type="InterPro" id="IPR000795">
    <property type="entry name" value="T_Tr_GTP-bd_dom"/>
</dbReference>
<dbReference type="InterPro" id="IPR000178">
    <property type="entry name" value="TF_IF2_bacterial-like"/>
</dbReference>
<dbReference type="InterPro" id="IPR015760">
    <property type="entry name" value="TIF_IF2"/>
</dbReference>
<dbReference type="InterPro" id="IPR023115">
    <property type="entry name" value="TIF_IF2_dom3"/>
</dbReference>
<dbReference type="InterPro" id="IPR036925">
    <property type="entry name" value="TIF_IF2_dom3_sf"/>
</dbReference>
<dbReference type="InterPro" id="IPR009000">
    <property type="entry name" value="Transl_B-barrel_sf"/>
</dbReference>
<dbReference type="NCBIfam" id="TIGR00487">
    <property type="entry name" value="IF-2"/>
    <property type="match status" value="1"/>
</dbReference>
<dbReference type="NCBIfam" id="TIGR00231">
    <property type="entry name" value="small_GTP"/>
    <property type="match status" value="1"/>
</dbReference>
<dbReference type="PANTHER" id="PTHR43381:SF5">
    <property type="entry name" value="TR-TYPE G DOMAIN-CONTAINING PROTEIN"/>
    <property type="match status" value="1"/>
</dbReference>
<dbReference type="PANTHER" id="PTHR43381">
    <property type="entry name" value="TRANSLATION INITIATION FACTOR IF-2-RELATED"/>
    <property type="match status" value="1"/>
</dbReference>
<dbReference type="Pfam" id="PF22042">
    <property type="entry name" value="EF-G_D2"/>
    <property type="match status" value="1"/>
</dbReference>
<dbReference type="Pfam" id="PF00009">
    <property type="entry name" value="GTP_EFTU"/>
    <property type="match status" value="1"/>
</dbReference>
<dbReference type="Pfam" id="PF11987">
    <property type="entry name" value="IF-2"/>
    <property type="match status" value="1"/>
</dbReference>
<dbReference type="Pfam" id="PF04760">
    <property type="entry name" value="IF2_N"/>
    <property type="match status" value="2"/>
</dbReference>
<dbReference type="SUPFAM" id="SSF52156">
    <property type="entry name" value="Initiation factor IF2/eIF5b, domain 3"/>
    <property type="match status" value="1"/>
</dbReference>
<dbReference type="SUPFAM" id="SSF52540">
    <property type="entry name" value="P-loop containing nucleoside triphosphate hydrolases"/>
    <property type="match status" value="1"/>
</dbReference>
<dbReference type="SUPFAM" id="SSF50447">
    <property type="entry name" value="Translation proteins"/>
    <property type="match status" value="2"/>
</dbReference>
<dbReference type="PROSITE" id="PS51722">
    <property type="entry name" value="G_TR_2"/>
    <property type="match status" value="1"/>
</dbReference>
<dbReference type="PROSITE" id="PS01176">
    <property type="entry name" value="IF2"/>
    <property type="match status" value="1"/>
</dbReference>
<name>IF2_LACE2</name>
<sequence length="939" mass="103788">MANMRVHELAKELNITSKDITDMLSNSEKTYKPVSGLTDAEISSVRKKFAPAPKVENKPAAQPAKQSQPVKNDNRDNRQQNQAPKQPQQGTQNKSGNADDKKHISQVYFPQNSSRDKNSRRDNNNRDGQRDNNGGYRNNDRNNGGYRNNDRGNNGYRNNDRNNNGGYGNRDNNGGYRNNDRNNNGGYGNRDNNGGYRNNDRNNGGYRNNDRNNNGGYGNRDNNGGYRNNDRNNNGGYGNRDNNGGYRNNDRNNNGGFRNDRNGQSGNGGFRKDNDQNRGGFNGGQRRNNDRRDSAPKEEFDFSAKPDSRRHDSRIDSKKNDRKRDNEAKENLKFANSRFDKKPMTKPEKKEKEEETIKQLVLPDTLTIKELADKMKVAPAALVKKLFLQGKVVTINEEIDYDAAEEIALEFNCICEHEEKVDVIAELLKEDEEPEDKLVPRPPVVCVMGHVDHGKTSLLDAIRETHVTAKESGGITQKIGAYQVNVNGNLITFLDTPGHEAFTAMRMRGAQATDIAILVVAADDGVMPQTIEAINHAKAAGVEIIVAVNKIDKPNANIEKVKQELTEYGLIAEDWGGSTTFVPVSAHTKQGIDELLDMILLTAEVNELKANPDRKARGIVIEAELDKGRGPVASILVQKGTLHVGDAVSAGSCYGKIRAMIDDKGNRVKVAGPSTPVEILGLNDVPNAGEIIMAADSEKEARSIAETFISEGRKKLLDDTKHKVSLDALFEQIQAGNMKELNIIIKADVQGSVEAVKSSLVRLSNEEVVVKVIHGGVGNVNESDVVLASASNAIIIAFNVKPDNQARIVAEREKVDLRLYSVIYNAIEDVEAALKGMLEPIYEEKIIGHARIMQIFKASGVGNIAGCIVEEGRITRDSVVRITRGSEKVYEGPIASLKHFKDEVKEIKAGTECGMVFEKFNDIQPEDMIEAHIMVEVPR</sequence>